<sequence length="419" mass="43287">MRNSNRGPAFLILFATLMAAAGDGVSIVAFPWLVLQREGSAGQASIVASATMLPLLFATLVAGTAVDYFGRRRVSMVADALSGAAVAGVPLVAWGYGGDAVNVLVLAVLAALAAAFGPAGMTARDSMLPEAAARAGWSLDRINGAYEAILNLAFIVGPAIGGLMIATVGGITTMWITATAFGLSILAIAALQLEGAGKPHHTSRPQGLVSGIAEGLRFVWNLRVLRTLGMIDLTVTALYLPMESVLFPKYFTDHQQPVQLGWALMAIAGGGLVGALGYAVLAIRVPRRVTMSTAVLTLGLASMVIAFLPPLPVIMVLCAVVGLVYGPIQPIYNYVIQTRAAQHLRGRVVGVMTSLAYAAGPLGLLLAGPLTDAAGLHATFLALALPIVCTGLVAIRLPALRELDLAPQADIDRPVGSAQ</sequence>
<reference key="1">
    <citation type="journal article" date="2007" name="Proc. Natl. Acad. Sci. U.S.A.">
        <title>Genome plasticity of BCG and impact on vaccine efficacy.</title>
        <authorList>
            <person name="Brosch R."/>
            <person name="Gordon S.V."/>
            <person name="Garnier T."/>
            <person name="Eiglmeier K."/>
            <person name="Frigui W."/>
            <person name="Valenti P."/>
            <person name="Dos Santos S."/>
            <person name="Duthoy S."/>
            <person name="Lacroix C."/>
            <person name="Garcia-Pelayo C."/>
            <person name="Inwald J.K."/>
            <person name="Golby P."/>
            <person name="Garcia J.N."/>
            <person name="Hewinson R.G."/>
            <person name="Behr M.A."/>
            <person name="Quail M.A."/>
            <person name="Churcher C."/>
            <person name="Barrell B.G."/>
            <person name="Parkhill J."/>
            <person name="Cole S.T."/>
        </authorList>
    </citation>
    <scope>NUCLEOTIDE SEQUENCE [LARGE SCALE GENOMIC DNA]</scope>
    <source>
        <strain>BCG / Pasteur 1173P2</strain>
    </source>
</reference>
<reference key="2">
    <citation type="journal article" date="2012" name="Antimicrob. Agents Chemother.">
        <title>Functional and genetic characterization of the tap efflux pump in Mycobacterium bovis BCG.</title>
        <authorList>
            <person name="Ramon-Garcia S."/>
            <person name="Mick V."/>
            <person name="Dainese E."/>
            <person name="Martin C."/>
            <person name="Thompson C.J."/>
            <person name="De Rossi E."/>
            <person name="Manganelli R."/>
            <person name="Ainsa J.A."/>
        </authorList>
    </citation>
    <scope>FUNCTION</scope>
    <scope>ACTIVITY REGULATION</scope>
    <scope>DISRUPTION PHENOTYPE</scope>
    <source>
        <strain>BCG / Pasteur 1173P2</strain>
    </source>
</reference>
<protein>
    <recommendedName>
        <fullName evidence="4">Multidrug efflux pump Tap</fullName>
    </recommendedName>
</protein>
<proteinExistence type="inferred from homology"/>
<gene>
    <name evidence="3" type="primary">tap</name>
    <name evidence="5" type="ordered locus">BCG_1316c</name>
</gene>
<evidence type="ECO:0000255" key="1"/>
<evidence type="ECO:0000269" key="2">
    <source>
    </source>
</evidence>
<evidence type="ECO:0000303" key="3">
    <source>
    </source>
</evidence>
<evidence type="ECO:0000305" key="4"/>
<evidence type="ECO:0000312" key="5">
    <source>
        <dbReference type="EMBL" id="CAL71303.1"/>
    </source>
</evidence>
<organism>
    <name type="scientific">Mycobacterium bovis (strain BCG / Pasteur 1173P2)</name>
    <dbReference type="NCBI Taxonomy" id="410289"/>
    <lineage>
        <taxon>Bacteria</taxon>
        <taxon>Bacillati</taxon>
        <taxon>Actinomycetota</taxon>
        <taxon>Actinomycetes</taxon>
        <taxon>Mycobacteriales</taxon>
        <taxon>Mycobacteriaceae</taxon>
        <taxon>Mycobacterium</taxon>
        <taxon>Mycobacterium tuberculosis complex</taxon>
    </lineage>
</organism>
<name>TAP_MYCBP</name>
<keyword id="KW-0046">Antibiotic resistance</keyword>
<keyword id="KW-0997">Cell inner membrane</keyword>
<keyword id="KW-1003">Cell membrane</keyword>
<keyword id="KW-0472">Membrane</keyword>
<keyword id="KW-0812">Transmembrane</keyword>
<keyword id="KW-1133">Transmembrane helix</keyword>
<keyword id="KW-0813">Transport</keyword>
<dbReference type="EMBL" id="AM408590">
    <property type="protein sequence ID" value="CAL71303.1"/>
    <property type="molecule type" value="Genomic_DNA"/>
</dbReference>
<dbReference type="RefSeq" id="WP_003406359.1">
    <property type="nucleotide sequence ID" value="NC_008769.1"/>
</dbReference>
<dbReference type="SMR" id="A0A0H3M5L9"/>
<dbReference type="KEGG" id="mbb:BCG_1316c"/>
<dbReference type="HOGENOM" id="CLU_034180_2_0_11"/>
<dbReference type="Proteomes" id="UP000001472">
    <property type="component" value="Chromosome"/>
</dbReference>
<dbReference type="GO" id="GO:0005886">
    <property type="term" value="C:plasma membrane"/>
    <property type="evidence" value="ECO:0007669"/>
    <property type="project" value="UniProtKB-SubCell"/>
</dbReference>
<dbReference type="GO" id="GO:0022857">
    <property type="term" value="F:transmembrane transporter activity"/>
    <property type="evidence" value="ECO:0007669"/>
    <property type="project" value="InterPro"/>
</dbReference>
<dbReference type="GO" id="GO:0046677">
    <property type="term" value="P:response to antibiotic"/>
    <property type="evidence" value="ECO:0007669"/>
    <property type="project" value="UniProtKB-KW"/>
</dbReference>
<dbReference type="CDD" id="cd06173">
    <property type="entry name" value="MFS_MefA_like"/>
    <property type="match status" value="1"/>
</dbReference>
<dbReference type="Gene3D" id="1.20.1250.20">
    <property type="entry name" value="MFS general substrate transporter like domains"/>
    <property type="match status" value="2"/>
</dbReference>
<dbReference type="InterPro" id="IPR011701">
    <property type="entry name" value="MFS"/>
</dbReference>
<dbReference type="InterPro" id="IPR020846">
    <property type="entry name" value="MFS_dom"/>
</dbReference>
<dbReference type="InterPro" id="IPR036259">
    <property type="entry name" value="MFS_trans_sf"/>
</dbReference>
<dbReference type="PANTHER" id="PTHR23513:SF9">
    <property type="entry name" value="ENTEROBACTIN EXPORTER ENTS"/>
    <property type="match status" value="1"/>
</dbReference>
<dbReference type="PANTHER" id="PTHR23513">
    <property type="entry name" value="INTEGRAL MEMBRANE EFFLUX PROTEIN-RELATED"/>
    <property type="match status" value="1"/>
</dbReference>
<dbReference type="Pfam" id="PF07690">
    <property type="entry name" value="MFS_1"/>
    <property type="match status" value="1"/>
</dbReference>
<dbReference type="SUPFAM" id="SSF103473">
    <property type="entry name" value="MFS general substrate transporter"/>
    <property type="match status" value="1"/>
</dbReference>
<dbReference type="PROSITE" id="PS50850">
    <property type="entry name" value="MFS"/>
    <property type="match status" value="1"/>
</dbReference>
<feature type="chain" id="PRO_0000447328" description="Multidrug efflux pump Tap">
    <location>
        <begin position="1"/>
        <end position="419"/>
    </location>
</feature>
<feature type="transmembrane region" description="Helical" evidence="1">
    <location>
        <begin position="7"/>
        <end position="29"/>
    </location>
</feature>
<feature type="transmembrane region" description="Helical" evidence="1">
    <location>
        <begin position="44"/>
        <end position="66"/>
    </location>
</feature>
<feature type="transmembrane region" description="Helical" evidence="1">
    <location>
        <begin position="73"/>
        <end position="95"/>
    </location>
</feature>
<feature type="transmembrane region" description="Helical" evidence="1">
    <location>
        <begin position="100"/>
        <end position="122"/>
    </location>
</feature>
<feature type="transmembrane region" description="Helical" evidence="1">
    <location>
        <begin position="149"/>
        <end position="171"/>
    </location>
</feature>
<feature type="transmembrane region" description="Helical" evidence="1">
    <location>
        <begin position="175"/>
        <end position="197"/>
    </location>
</feature>
<feature type="transmembrane region" description="Helical" evidence="1">
    <location>
        <begin position="218"/>
        <end position="240"/>
    </location>
</feature>
<feature type="transmembrane region" description="Helical" evidence="1">
    <location>
        <begin position="260"/>
        <end position="282"/>
    </location>
</feature>
<feature type="transmembrane region" description="Helical" evidence="1">
    <location>
        <begin position="289"/>
        <end position="308"/>
    </location>
</feature>
<feature type="transmembrane region" description="Helical" evidence="1">
    <location>
        <begin position="313"/>
        <end position="335"/>
    </location>
</feature>
<feature type="transmembrane region" description="Helical" evidence="1">
    <location>
        <begin position="348"/>
        <end position="370"/>
    </location>
</feature>
<feature type="transmembrane region" description="Helical" evidence="1">
    <location>
        <begin position="375"/>
        <end position="397"/>
    </location>
</feature>
<comment type="function">
    <text evidence="2">Efflux pump that contributes to intrinsic antibiotic resistance. The pump uses the electrochemical gradient as a source of energy. Confers resistance to various antibiotics, including tetracycline, acriflavine, spectinomycin and p-aminosalicylate. May be involved in export of toxic by-products that accumulate during stationary phase when nutrients are limited.</text>
</comment>
<comment type="activity regulation">
    <text evidence="2">Efflux activity is inhibited by carbonyl cyanide m-chlorophenylhydrazone (CCCP).</text>
</comment>
<comment type="subcellular location">
    <subcellularLocation>
        <location evidence="4">Cell inner membrane</location>
        <topology evidence="1">Multi-pass membrane protein</topology>
    </subcellularLocation>
</comment>
<comment type="disruption phenotype">
    <text evidence="2">Disruption mutant shows changes in morphology, growth defects and a progressive loss of viability upon subcultivation in liquid medium. Disruption leads to an extensive change in gene expression patterns during stationary phase, with no changes during exponential growth. It also alters susceptibility to many antibiotics.</text>
</comment>
<comment type="similarity">
    <text evidence="4">Belongs to the major facilitator superfamily. Drug:H(+) antiporter-3 (DHA3) (TC 2.A.1.21) family.</text>
</comment>
<accession>A0A0H3M5L9</accession>